<sequence length="195" mass="22067">MKSKGVESRKRLLKAAANEFSVRGFHDAKVSEIVKKAGFTQPSFYLYFQSKEAIFAELITDFHSRVRKLTESLLLENGLNTEDVSKRVLLAVETVFQFLDEDKDLTKIGFFLNPEAKQMKKDLAMVLKENLEAEQRLGYFHSELDMETVAECLVGMIEHLTESFLLTGIKDPASLAAEVVNLLIYGMLPKGNDVR</sequence>
<reference key="1">
    <citation type="submission" date="1997-03" db="EMBL/GenBank/DDBJ databases">
        <title>A 148 kbp sequence of the region between 35 and 47 degree of the Bacillus subtilis genome.</title>
        <authorList>
            <person name="Kasahara Y."/>
            <person name="Nakai S."/>
            <person name="Lee S."/>
            <person name="Sadaie Y."/>
            <person name="Ogasawara N."/>
        </authorList>
    </citation>
    <scope>NUCLEOTIDE SEQUENCE [GENOMIC DNA]</scope>
    <source>
        <strain>168</strain>
    </source>
</reference>
<reference key="2">
    <citation type="journal article" date="1997" name="Nature">
        <title>The complete genome sequence of the Gram-positive bacterium Bacillus subtilis.</title>
        <authorList>
            <person name="Kunst F."/>
            <person name="Ogasawara N."/>
            <person name="Moszer I."/>
            <person name="Albertini A.M."/>
            <person name="Alloni G."/>
            <person name="Azevedo V."/>
            <person name="Bertero M.G."/>
            <person name="Bessieres P."/>
            <person name="Bolotin A."/>
            <person name="Borchert S."/>
            <person name="Borriss R."/>
            <person name="Boursier L."/>
            <person name="Brans A."/>
            <person name="Braun M."/>
            <person name="Brignell S.C."/>
            <person name="Bron S."/>
            <person name="Brouillet S."/>
            <person name="Bruschi C.V."/>
            <person name="Caldwell B."/>
            <person name="Capuano V."/>
            <person name="Carter N.M."/>
            <person name="Choi S.-K."/>
            <person name="Codani J.-J."/>
            <person name="Connerton I.F."/>
            <person name="Cummings N.J."/>
            <person name="Daniel R.A."/>
            <person name="Denizot F."/>
            <person name="Devine K.M."/>
            <person name="Duesterhoeft A."/>
            <person name="Ehrlich S.D."/>
            <person name="Emmerson P.T."/>
            <person name="Entian K.-D."/>
            <person name="Errington J."/>
            <person name="Fabret C."/>
            <person name="Ferrari E."/>
            <person name="Foulger D."/>
            <person name="Fritz C."/>
            <person name="Fujita M."/>
            <person name="Fujita Y."/>
            <person name="Fuma S."/>
            <person name="Galizzi A."/>
            <person name="Galleron N."/>
            <person name="Ghim S.-Y."/>
            <person name="Glaser P."/>
            <person name="Goffeau A."/>
            <person name="Golightly E.J."/>
            <person name="Grandi G."/>
            <person name="Guiseppi G."/>
            <person name="Guy B.J."/>
            <person name="Haga K."/>
            <person name="Haiech J."/>
            <person name="Harwood C.R."/>
            <person name="Henaut A."/>
            <person name="Hilbert H."/>
            <person name="Holsappel S."/>
            <person name="Hosono S."/>
            <person name="Hullo M.-F."/>
            <person name="Itaya M."/>
            <person name="Jones L.-M."/>
            <person name="Joris B."/>
            <person name="Karamata D."/>
            <person name="Kasahara Y."/>
            <person name="Klaerr-Blanchard M."/>
            <person name="Klein C."/>
            <person name="Kobayashi Y."/>
            <person name="Koetter P."/>
            <person name="Koningstein G."/>
            <person name="Krogh S."/>
            <person name="Kumano M."/>
            <person name="Kurita K."/>
            <person name="Lapidus A."/>
            <person name="Lardinois S."/>
            <person name="Lauber J."/>
            <person name="Lazarevic V."/>
            <person name="Lee S.-M."/>
            <person name="Levine A."/>
            <person name="Liu H."/>
            <person name="Masuda S."/>
            <person name="Mauel C."/>
            <person name="Medigue C."/>
            <person name="Medina N."/>
            <person name="Mellado R.P."/>
            <person name="Mizuno M."/>
            <person name="Moestl D."/>
            <person name="Nakai S."/>
            <person name="Noback M."/>
            <person name="Noone D."/>
            <person name="O'Reilly M."/>
            <person name="Ogawa K."/>
            <person name="Ogiwara A."/>
            <person name="Oudega B."/>
            <person name="Park S.-H."/>
            <person name="Parro V."/>
            <person name="Pohl T.M."/>
            <person name="Portetelle D."/>
            <person name="Porwollik S."/>
            <person name="Prescott A.M."/>
            <person name="Presecan E."/>
            <person name="Pujic P."/>
            <person name="Purnelle B."/>
            <person name="Rapoport G."/>
            <person name="Rey M."/>
            <person name="Reynolds S."/>
            <person name="Rieger M."/>
            <person name="Rivolta C."/>
            <person name="Rocha E."/>
            <person name="Roche B."/>
            <person name="Rose M."/>
            <person name="Sadaie Y."/>
            <person name="Sato T."/>
            <person name="Scanlan E."/>
            <person name="Schleich S."/>
            <person name="Schroeter R."/>
            <person name="Scoffone F."/>
            <person name="Sekiguchi J."/>
            <person name="Sekowska A."/>
            <person name="Seror S.J."/>
            <person name="Serror P."/>
            <person name="Shin B.-S."/>
            <person name="Soldo B."/>
            <person name="Sorokin A."/>
            <person name="Tacconi E."/>
            <person name="Takagi T."/>
            <person name="Takahashi H."/>
            <person name="Takemaru K."/>
            <person name="Takeuchi M."/>
            <person name="Tamakoshi A."/>
            <person name="Tanaka T."/>
            <person name="Terpstra P."/>
            <person name="Tognoni A."/>
            <person name="Tosato V."/>
            <person name="Uchiyama S."/>
            <person name="Vandenbol M."/>
            <person name="Vannier F."/>
            <person name="Vassarotti A."/>
            <person name="Viari A."/>
            <person name="Wambutt R."/>
            <person name="Wedler E."/>
            <person name="Wedler H."/>
            <person name="Weitzenegger T."/>
            <person name="Winters P."/>
            <person name="Wipat A."/>
            <person name="Yamamoto H."/>
            <person name="Yamane K."/>
            <person name="Yasumoto K."/>
            <person name="Yata K."/>
            <person name="Yoshida K."/>
            <person name="Yoshikawa H.-F."/>
            <person name="Zumstein E."/>
            <person name="Yoshikawa H."/>
            <person name="Danchin A."/>
        </authorList>
    </citation>
    <scope>NUCLEOTIDE SEQUENCE [LARGE SCALE GENOMIC DNA]</scope>
    <source>
        <strain>168</strain>
    </source>
</reference>
<reference key="3">
    <citation type="journal article" date="2005" name="Microbiol. Mol. Biol. Rev.">
        <title>The TetR family of transcriptional repressors.</title>
        <authorList>
            <person name="Ramos J.L."/>
            <person name="Martinez-Bueno M."/>
            <person name="Molina-Henares A.J."/>
            <person name="Teran W."/>
            <person name="Watanabe K."/>
            <person name="Zhang X."/>
            <person name="Gallegos M.T."/>
            <person name="Brennan R."/>
            <person name="Tobes R."/>
        </authorList>
    </citation>
    <scope>REVIEW</scope>
    <scope>GENE FAMILY</scope>
</reference>
<dbReference type="EMBL" id="AB001488">
    <property type="protein sequence ID" value="BAA19391.1"/>
    <property type="molecule type" value="Genomic_DNA"/>
</dbReference>
<dbReference type="EMBL" id="AL009126">
    <property type="protein sequence ID" value="CAB12365.1"/>
    <property type="molecule type" value="Genomic_DNA"/>
</dbReference>
<dbReference type="PIR" id="E69782">
    <property type="entry name" value="E69782"/>
</dbReference>
<dbReference type="RefSeq" id="NP_388439.1">
    <property type="nucleotide sequence ID" value="NC_000964.3"/>
</dbReference>
<dbReference type="RefSeq" id="WP_003234149.1">
    <property type="nucleotide sequence ID" value="NZ_OZ025638.1"/>
</dbReference>
<dbReference type="SMR" id="P96701"/>
<dbReference type="FunCoup" id="P96701">
    <property type="interactions" value="13"/>
</dbReference>
<dbReference type="STRING" id="224308.BSU05580"/>
<dbReference type="PaxDb" id="224308-BSU05580"/>
<dbReference type="DNASU" id="938064"/>
<dbReference type="EnsemblBacteria" id="CAB12365">
    <property type="protein sequence ID" value="CAB12365"/>
    <property type="gene ID" value="BSU_05580"/>
</dbReference>
<dbReference type="GeneID" id="938064"/>
<dbReference type="KEGG" id="bsu:BSU05580"/>
<dbReference type="PATRIC" id="fig|224308.179.peg.600"/>
<dbReference type="eggNOG" id="COG1309">
    <property type="taxonomic scope" value="Bacteria"/>
</dbReference>
<dbReference type="InParanoid" id="P96701"/>
<dbReference type="OrthoDB" id="9812484at2"/>
<dbReference type="PhylomeDB" id="P96701"/>
<dbReference type="BioCyc" id="BSUB:BSU05580-MONOMER"/>
<dbReference type="Proteomes" id="UP000001570">
    <property type="component" value="Chromosome"/>
</dbReference>
<dbReference type="GO" id="GO:0032993">
    <property type="term" value="C:protein-DNA complex"/>
    <property type="evidence" value="ECO:0000318"/>
    <property type="project" value="GO_Central"/>
</dbReference>
<dbReference type="GO" id="GO:0003677">
    <property type="term" value="F:DNA binding"/>
    <property type="evidence" value="ECO:0007669"/>
    <property type="project" value="UniProtKB-KW"/>
</dbReference>
<dbReference type="GO" id="GO:0003700">
    <property type="term" value="F:DNA-binding transcription factor activity"/>
    <property type="evidence" value="ECO:0000318"/>
    <property type="project" value="GO_Central"/>
</dbReference>
<dbReference type="Gene3D" id="1.10.357.10">
    <property type="entry name" value="Tetracycline Repressor, domain 2"/>
    <property type="match status" value="1"/>
</dbReference>
<dbReference type="InterPro" id="IPR009057">
    <property type="entry name" value="Homeodomain-like_sf"/>
</dbReference>
<dbReference type="InterPro" id="IPR050624">
    <property type="entry name" value="HTH-type_Tx_Regulator"/>
</dbReference>
<dbReference type="InterPro" id="IPR001647">
    <property type="entry name" value="HTH_TetR"/>
</dbReference>
<dbReference type="InterPro" id="IPR036271">
    <property type="entry name" value="Tet_transcr_reg_TetR-rel_C_sf"/>
</dbReference>
<dbReference type="PANTHER" id="PTHR43479">
    <property type="entry name" value="ACREF/ENVCD OPERON REPRESSOR-RELATED"/>
    <property type="match status" value="1"/>
</dbReference>
<dbReference type="PANTHER" id="PTHR43479:SF8">
    <property type="entry name" value="TRANSCRIPTIONAL REGULATOR, TETR FAMILY"/>
    <property type="match status" value="1"/>
</dbReference>
<dbReference type="Pfam" id="PF00440">
    <property type="entry name" value="TetR_N"/>
    <property type="match status" value="1"/>
</dbReference>
<dbReference type="PRINTS" id="PR00455">
    <property type="entry name" value="HTHTETR"/>
</dbReference>
<dbReference type="SUPFAM" id="SSF46689">
    <property type="entry name" value="Homeodomain-like"/>
    <property type="match status" value="1"/>
</dbReference>
<dbReference type="SUPFAM" id="SSF48498">
    <property type="entry name" value="Tetracyclin repressor-like, C-terminal domain"/>
    <property type="match status" value="1"/>
</dbReference>
<dbReference type="PROSITE" id="PS50977">
    <property type="entry name" value="HTH_TETR_2"/>
    <property type="match status" value="1"/>
</dbReference>
<proteinExistence type="predicted"/>
<name>YDGC_BACSU</name>
<gene>
    <name type="primary">ydgC</name>
    <name type="ordered locus">BSU05580</name>
</gene>
<accession>P96701</accession>
<accession>Q797F4</accession>
<protein>
    <recommendedName>
        <fullName>Uncharacterized HTH-type transcriptional regulator YdgC</fullName>
    </recommendedName>
</protein>
<organism>
    <name type="scientific">Bacillus subtilis (strain 168)</name>
    <dbReference type="NCBI Taxonomy" id="224308"/>
    <lineage>
        <taxon>Bacteria</taxon>
        <taxon>Bacillati</taxon>
        <taxon>Bacillota</taxon>
        <taxon>Bacilli</taxon>
        <taxon>Bacillales</taxon>
        <taxon>Bacillaceae</taxon>
        <taxon>Bacillus</taxon>
    </lineage>
</organism>
<keyword id="KW-0238">DNA-binding</keyword>
<keyword id="KW-1185">Reference proteome</keyword>
<keyword id="KW-0678">Repressor</keyword>
<keyword id="KW-0804">Transcription</keyword>
<keyword id="KW-0805">Transcription regulation</keyword>
<evidence type="ECO:0000255" key="1">
    <source>
        <dbReference type="PROSITE-ProRule" id="PRU00335"/>
    </source>
</evidence>
<feature type="chain" id="PRO_0000360491" description="Uncharacterized HTH-type transcriptional regulator YdgC">
    <location>
        <begin position="1"/>
        <end position="195"/>
    </location>
</feature>
<feature type="domain" description="HTH tetR-type" evidence="1">
    <location>
        <begin position="6"/>
        <end position="66"/>
    </location>
</feature>
<feature type="DNA-binding region" description="H-T-H motif" evidence="1">
    <location>
        <begin position="29"/>
        <end position="48"/>
    </location>
</feature>